<accession>A0A7G6E019</accession>
<keyword id="KW-0051">Antiviral defense</keyword>
<keyword id="KW-0238">DNA-binding</keyword>
<keyword id="KW-0460">Magnesium</keyword>
<keyword id="KW-0479">Metal-binding</keyword>
<keyword id="KW-1185">Reference proteome</keyword>
<keyword id="KW-0694">RNA-binding</keyword>
<keyword id="KW-0804">Transcription</keyword>
<keyword id="KW-0805">Transcription regulation</keyword>
<keyword id="KW-0862">Zinc</keyword>
<name>CS12M_THEFR</name>
<evidence type="ECO:0000250" key="1">
    <source>
        <dbReference type="UniProtKB" id="P0DXB1"/>
    </source>
</evidence>
<evidence type="ECO:0000269" key="2">
    <source>
    </source>
</evidence>
<evidence type="ECO:0000303" key="3">
    <source>
    </source>
</evidence>
<evidence type="ECO:0000305" key="4"/>
<evidence type="ECO:0000305" key="5">
    <source>
    </source>
</evidence>
<evidence type="ECO:0000312" key="6">
    <source>
        <dbReference type="EMBL" id="QNB45423.1"/>
    </source>
</evidence>
<dbReference type="EMBL" id="CP045798">
    <property type="protein sequence ID" value="QNB45423.1"/>
    <property type="molecule type" value="Genomic_DNA"/>
</dbReference>
<dbReference type="SMR" id="A0A7G6E019"/>
<dbReference type="KEGG" id="tfr:BR63_03280"/>
<dbReference type="Proteomes" id="UP000515847">
    <property type="component" value="Chromosome"/>
</dbReference>
<dbReference type="GO" id="GO:0003677">
    <property type="term" value="F:DNA binding"/>
    <property type="evidence" value="ECO:0007669"/>
    <property type="project" value="UniProtKB-KW"/>
</dbReference>
<dbReference type="GO" id="GO:0046872">
    <property type="term" value="F:metal ion binding"/>
    <property type="evidence" value="ECO:0007669"/>
    <property type="project" value="UniProtKB-KW"/>
</dbReference>
<dbReference type="GO" id="GO:0003723">
    <property type="term" value="F:RNA binding"/>
    <property type="evidence" value="ECO:0007669"/>
    <property type="project" value="UniProtKB-KW"/>
</dbReference>
<dbReference type="GO" id="GO:0051607">
    <property type="term" value="P:defense response to virus"/>
    <property type="evidence" value="ECO:0007669"/>
    <property type="project" value="UniProtKB-KW"/>
</dbReference>
<dbReference type="InterPro" id="IPR010095">
    <property type="entry name" value="Cas12f1-like_TNB"/>
</dbReference>
<dbReference type="Pfam" id="PF07282">
    <property type="entry name" value="Cas12f1-like_TNB"/>
    <property type="match status" value="1"/>
</dbReference>
<protein>
    <recommendedName>
        <fullName evidence="3">CRISPR-associated DNA-binding protein Cas12m</fullName>
        <shortName evidence="3">TfCas12m</shortName>
    </recommendedName>
</protein>
<reference evidence="6" key="1">
    <citation type="journal article" date="2019" name="Front. Microbiol.">
        <title>Thermoanaerosceptrum fracticalcis gen. nov. sp. nov., a Novel Fumarate-Fermenting Microorganism From a Deep Fractured Carbonate Aquifer of the US Great Basin.</title>
        <authorList>
            <person name="Hamilton-Brehm S.D."/>
            <person name="Stewart L.E."/>
            <person name="Zavarin M."/>
            <person name="Caldwell M."/>
            <person name="Lawson P.A."/>
            <person name="Onstott T.C."/>
            <person name="Grzymski J."/>
            <person name="Neveux I."/>
            <person name="Lollar B.S."/>
            <person name="Russell C.E."/>
            <person name="Moser D.P."/>
        </authorList>
    </citation>
    <scope>NUCLEOTIDE SEQUENCE [LARGE SCALE GENOMIC DNA]</scope>
    <source>
        <strain>ATCC TSD-12 / DSM 100382 / DRI-13</strain>
    </source>
</reference>
<reference key="2">
    <citation type="journal article" date="2024" name="Nucleic Acids Res.">
        <title>Innate programmable DNA binding by CRISPR-Cas12m effectors enable efficient base editing.</title>
        <authorList>
            <person name="Bigelyte G."/>
            <person name="Duchovska B."/>
            <person name="Zedaveinyte R."/>
            <person name="Sasnauskas G."/>
            <person name="Sinkunas T."/>
            <person name="Dalgediene I."/>
            <person name="Tamulaitiene G."/>
            <person name="Silanskas A."/>
            <person name="Kazlauskas D."/>
            <person name="Valancauskas L."/>
            <person name="Madariaga-Marcos J."/>
            <person name="Seidel R."/>
            <person name="Siksnys V."/>
            <person name="Karvelis T."/>
        </authorList>
    </citation>
    <scope>FUNCTION IN PLASMID SILENCING</scope>
    <scope>DNA-BINDING</scope>
    <scope>RNA-BINDING</scope>
    <source>
        <strain>ATCC TSD-12 / DSM 100382 / DRI-13</strain>
    </source>
</reference>
<organism>
    <name type="scientific">Thermanaerosceptrum fracticalcis</name>
    <dbReference type="NCBI Taxonomy" id="1712410"/>
    <lineage>
        <taxon>Bacteria</taxon>
        <taxon>Bacillati</taxon>
        <taxon>Bacillota</taxon>
        <taxon>Clostridia</taxon>
        <taxon>Eubacteriales</taxon>
        <taxon>Peptococcaceae</taxon>
        <taxon>Thermanaerosceptrum</taxon>
    </lineage>
</organism>
<gene>
    <name evidence="3" type="primary">cas12m</name>
    <name evidence="6" type="ORF">BR63_03280</name>
</gene>
<feature type="chain" id="PRO_0000460486" description="CRISPR-associated DNA-binding protein Cas12m">
    <location>
        <begin position="1"/>
        <end position="594"/>
    </location>
</feature>
<feature type="region of interest" description="Recognition domain (REC1-N)" evidence="1">
    <location>
        <begin position="1"/>
        <end position="85"/>
    </location>
</feature>
<feature type="region of interest" description="Recognition domain (REC2)" evidence="1">
    <location>
        <begin position="86"/>
        <end position="153"/>
    </location>
</feature>
<feature type="region of interest" description="Recognition domain (REC1-C)" evidence="1">
    <location>
        <begin position="154"/>
        <end position="211"/>
    </location>
</feature>
<feature type="region of interest" description="Wedge domain (WED)" evidence="1">
    <location>
        <begin position="212"/>
        <end position="314"/>
    </location>
</feature>
<feature type="region of interest" description="Linker" evidence="1">
    <location>
        <begin position="315"/>
        <end position="329"/>
    </location>
</feature>
<feature type="region of interest" description="RuvC-I" evidence="1">
    <location>
        <begin position="330"/>
        <end position="540"/>
    </location>
</feature>
<feature type="region of interest" description="Target nucleic-acid binding (TNB)" evidence="1">
    <location>
        <begin position="541"/>
        <end position="575"/>
    </location>
</feature>
<feature type="region of interest" description="RuvC-II" evidence="1">
    <location>
        <begin position="576"/>
        <end position="594"/>
    </location>
</feature>
<feature type="binding site" evidence="4">
    <location>
        <position position="548"/>
    </location>
    <ligand>
        <name>Zn(2+)</name>
        <dbReference type="ChEBI" id="CHEBI:29105"/>
    </ligand>
</feature>
<feature type="binding site" evidence="1">
    <location>
        <position position="551"/>
    </location>
    <ligand>
        <name>Zn(2+)</name>
        <dbReference type="ChEBI" id="CHEBI:29105"/>
    </ligand>
</feature>
<feature type="binding site" evidence="1">
    <location>
        <position position="567"/>
    </location>
    <ligand>
        <name>Zn(2+)</name>
        <dbReference type="ChEBI" id="CHEBI:29105"/>
    </ligand>
</feature>
<feature type="binding site" evidence="1">
    <location>
        <position position="570"/>
    </location>
    <ligand>
        <name>Zn(2+)</name>
        <dbReference type="ChEBI" id="CHEBI:29105"/>
    </ligand>
</feature>
<feature type="binding site" evidence="1">
    <location>
        <position position="577"/>
    </location>
    <ligand>
        <name>Mg(2+)</name>
        <dbReference type="ChEBI" id="CHEBI:18420"/>
    </ligand>
</feature>
<proteinExistence type="evidence at protein level"/>
<sequence>MSRLEARTRYLQAGQKRLGKIRKRGFFMETAATKNYLALSFGCLSPTRGEEYLLDQIKKKHDLWNKLVEKDREHREKVRQVMVFESETTKKIKELEEELNSLREEIKNQRKTKRTGKVDLTDQKARIEEIKPQLKQLKEKFKEERSFIFEARKQELAQLEKERWAVVKELGKGSGLYWCNLEDVVNSYDIGRKKAKAAGGEMRFHRWDGTGKVTVRFQKGLPVNEMFSCTNNLLQIDPVDKDAWYNPVRAIRRKKSRTRVRLRACSENKKPLFIELPVVLHREIPEDALIRTASVIREKVGMRYRYKLNLVLEILGENTNRILPALEGTAAIDLGWRTVKDGLRVACLVDDKGHSEELILDNDVLHEFNKIKDLQSIRDNLFNETKAKLMELLKTLELPDEAKERTSHMANWRSQQKMLRLHQYWRENRLPGDDEVWEVLEYWRKREIHLYEWQENLRDQVLRRRKEIYRIFAAKITRKYKTIVLEEFTLNKTVQKPNPEEGPAGTLPANRNRFIAAISEFRNELANACRKNHVEFTYVPAENTTITCHKCGHKEKFDAAAQIIHTCSTCGELWDQDYNAAKNLLAFSQKGGVK</sequence>
<comment type="function">
    <text evidence="2 5">CRISPR (clustered regularly interspaced short palindromic repeat), is an adaptive immune system that provides protection against mobile genetic elements (viruses, transposable elements and conjugative plasmids) (Probable) (PubMed:38261981). CRISPR clusters contain sequences complementary to antecedent mobile elements and target invading nucleic acids (Probable) (PubMed:38261981). CRISPR clusters are transcribed and processed into CRISPR RNA (crRNA) (PubMed:38261981). Recognizes a short motif in the CRISPR repeat sequences (the 5' PAM or protospacer adjacent motif, 5'-C/TCN-3' in this organism) to help distinguish self versus nonself, as targets within the bacterial CRISPR locus do not have PAMs (PubMed:38261981). Upon expression in E.coli as a CRISPR locus inhibits plasmid propagation when targeted to regions essential for plasmid propagation (replication origin but not a selectable marker), probably by inhibiting transcription (PubMed:38261981). Cas12m-crRNA binds DNA in a PAM-dependent, crRNA-guided fashion (PubMed:38261981). Upon expression in E.coli as a CRISPR region preferentially binds to its associated crRNA (PubMed:38261981). Probably required for pre-crRNA processing to mature crRNA (Probable) (PubMed:38261981).</text>
</comment>
<comment type="cofactor">
    <cofactor evidence="1">
        <name>Mg(2+)</name>
        <dbReference type="ChEBI" id="CHEBI:18420"/>
    </cofactor>
    <text evidence="1">Binds only 1 Mg(2+) as opposed to 2 usually seen in other Cas12 enzymes; lack of the second Mg(2+) results in loss of target DNA cleavage activity.</text>
</comment>
<comment type="cofactor">
    <cofactor evidence="1">
        <name>Zn(2+)</name>
        <dbReference type="ChEBI" id="CHEBI:29105"/>
    </cofactor>
    <text evidence="1">Binds 1 Zn(2+) within the target nucleic-acid binding (TNB) domain.</text>
</comment>
<comment type="domain">
    <text evidence="1">Has a bilobed structure, with a recognition (REC) lobe and nuclease (NUC) lobe. The REC lobe (residues 1-314) is formed by the discontinuous recognition (REC) and wedge (WED) domains, while the NUC lobe (residues 330-594) is formed by the discontinuous RuvC and target nucleic-acid binding (TNB) domains. The crRNA-single-strand target DNA duplex is bound in the central channel between the 2 lobes while the non-target single stranded DNA is bound to pockets in the REC and RuvC domains.</text>
</comment>
<comment type="miscellaneous">
    <text evidence="5">Part of a type V-M CRISPR-Cas system.</text>
</comment>
<comment type="similarity">
    <text evidence="3">Belongs to the CRISPR-associated DNA-binding protein Cas12m family.</text>
</comment>